<dbReference type="EMBL" id="CP000961">
    <property type="protein sequence ID" value="ACA84304.1"/>
    <property type="molecule type" value="Genomic_DNA"/>
</dbReference>
<dbReference type="RefSeq" id="WP_012322653.1">
    <property type="nucleotide sequence ID" value="NC_010506.1"/>
</dbReference>
<dbReference type="SMR" id="B1KCX5"/>
<dbReference type="STRING" id="392500.Swoo_0003"/>
<dbReference type="KEGG" id="swd:Swoo_0003"/>
<dbReference type="eggNOG" id="COG1195">
    <property type="taxonomic scope" value="Bacteria"/>
</dbReference>
<dbReference type="HOGENOM" id="CLU_040267_0_0_6"/>
<dbReference type="Proteomes" id="UP000002168">
    <property type="component" value="Chromosome"/>
</dbReference>
<dbReference type="GO" id="GO:0005737">
    <property type="term" value="C:cytoplasm"/>
    <property type="evidence" value="ECO:0007669"/>
    <property type="project" value="UniProtKB-SubCell"/>
</dbReference>
<dbReference type="GO" id="GO:0005524">
    <property type="term" value="F:ATP binding"/>
    <property type="evidence" value="ECO:0007669"/>
    <property type="project" value="UniProtKB-UniRule"/>
</dbReference>
<dbReference type="GO" id="GO:0003697">
    <property type="term" value="F:single-stranded DNA binding"/>
    <property type="evidence" value="ECO:0007669"/>
    <property type="project" value="UniProtKB-UniRule"/>
</dbReference>
<dbReference type="GO" id="GO:0006260">
    <property type="term" value="P:DNA replication"/>
    <property type="evidence" value="ECO:0007669"/>
    <property type="project" value="UniProtKB-UniRule"/>
</dbReference>
<dbReference type="GO" id="GO:0000731">
    <property type="term" value="P:DNA synthesis involved in DNA repair"/>
    <property type="evidence" value="ECO:0007669"/>
    <property type="project" value="TreeGrafter"/>
</dbReference>
<dbReference type="GO" id="GO:0006302">
    <property type="term" value="P:double-strand break repair"/>
    <property type="evidence" value="ECO:0007669"/>
    <property type="project" value="TreeGrafter"/>
</dbReference>
<dbReference type="GO" id="GO:0009432">
    <property type="term" value="P:SOS response"/>
    <property type="evidence" value="ECO:0007669"/>
    <property type="project" value="UniProtKB-UniRule"/>
</dbReference>
<dbReference type="Gene3D" id="3.40.50.300">
    <property type="entry name" value="P-loop containing nucleotide triphosphate hydrolases"/>
    <property type="match status" value="1"/>
</dbReference>
<dbReference type="Gene3D" id="1.20.1050.90">
    <property type="entry name" value="RecF/RecN/SMC, N-terminal domain"/>
    <property type="match status" value="1"/>
</dbReference>
<dbReference type="HAMAP" id="MF_00365">
    <property type="entry name" value="RecF"/>
    <property type="match status" value="1"/>
</dbReference>
<dbReference type="InterPro" id="IPR001238">
    <property type="entry name" value="DNA-binding_RecF"/>
</dbReference>
<dbReference type="InterPro" id="IPR018078">
    <property type="entry name" value="DNA-binding_RecF_CS"/>
</dbReference>
<dbReference type="InterPro" id="IPR027417">
    <property type="entry name" value="P-loop_NTPase"/>
</dbReference>
<dbReference type="InterPro" id="IPR003395">
    <property type="entry name" value="RecF/RecN/SMC_N"/>
</dbReference>
<dbReference type="InterPro" id="IPR042174">
    <property type="entry name" value="RecF_2"/>
</dbReference>
<dbReference type="NCBIfam" id="TIGR00611">
    <property type="entry name" value="recf"/>
    <property type="match status" value="1"/>
</dbReference>
<dbReference type="PANTHER" id="PTHR32182">
    <property type="entry name" value="DNA REPLICATION AND REPAIR PROTEIN RECF"/>
    <property type="match status" value="1"/>
</dbReference>
<dbReference type="PANTHER" id="PTHR32182:SF0">
    <property type="entry name" value="DNA REPLICATION AND REPAIR PROTEIN RECF"/>
    <property type="match status" value="1"/>
</dbReference>
<dbReference type="Pfam" id="PF02463">
    <property type="entry name" value="SMC_N"/>
    <property type="match status" value="1"/>
</dbReference>
<dbReference type="SUPFAM" id="SSF52540">
    <property type="entry name" value="P-loop containing nucleoside triphosphate hydrolases"/>
    <property type="match status" value="1"/>
</dbReference>
<dbReference type="PROSITE" id="PS00617">
    <property type="entry name" value="RECF_1"/>
    <property type="match status" value="1"/>
</dbReference>
<dbReference type="PROSITE" id="PS00618">
    <property type="entry name" value="RECF_2"/>
    <property type="match status" value="1"/>
</dbReference>
<feature type="chain" id="PRO_1000121155" description="DNA replication and repair protein RecF">
    <location>
        <begin position="1"/>
        <end position="365"/>
    </location>
</feature>
<feature type="binding site" evidence="1">
    <location>
        <begin position="30"/>
        <end position="37"/>
    </location>
    <ligand>
        <name>ATP</name>
        <dbReference type="ChEBI" id="CHEBI:30616"/>
    </ligand>
</feature>
<sequence>MSLTRLHIETFRNISSAQLHPSDGLNLIYGQNGSGKTSVLEAIYFLGMGRSFRSHLSQRVIQHQDDKLTLFANLSLGEQESKIGLRRFRSGETEVKINGDKIKRLSTLAETLPIQVITPESFSLLFEGPKSRRQFIDWGAFHSDKSFHSAWANVKRILKQRNQLLKNQVSYSQIQFWDKELVRYSELVTLIRKEYVDSLNEQLKGIIVEFLPQVEVKVSFTRGWDSKTDFGQLLETQYLRDVAAGNTGSGPHKADLRLRVGTLPVQDALSRGQLKLLVCALRIAQGKLLKQQTDKNSIYLVDDLPSELDAKHRQLLLQQLMDTGAQIFVTAIDPAAIVDSLTTPPSKMFHVEQGCVTVIDKPTRE</sequence>
<accession>B1KCX5</accession>
<protein>
    <recommendedName>
        <fullName evidence="1">DNA replication and repair protein RecF</fullName>
    </recommendedName>
</protein>
<keyword id="KW-0067">ATP-binding</keyword>
<keyword id="KW-0963">Cytoplasm</keyword>
<keyword id="KW-0227">DNA damage</keyword>
<keyword id="KW-0234">DNA repair</keyword>
<keyword id="KW-0235">DNA replication</keyword>
<keyword id="KW-0238">DNA-binding</keyword>
<keyword id="KW-0547">Nucleotide-binding</keyword>
<keyword id="KW-1185">Reference proteome</keyword>
<keyword id="KW-0742">SOS response</keyword>
<name>RECF_SHEWM</name>
<reference key="1">
    <citation type="submission" date="2008-02" db="EMBL/GenBank/DDBJ databases">
        <title>Complete sequence of Shewanella woodyi ATCC 51908.</title>
        <authorList>
            <consortium name="US DOE Joint Genome Institute"/>
            <person name="Copeland A."/>
            <person name="Lucas S."/>
            <person name="Lapidus A."/>
            <person name="Glavina del Rio T."/>
            <person name="Dalin E."/>
            <person name="Tice H."/>
            <person name="Bruce D."/>
            <person name="Goodwin L."/>
            <person name="Pitluck S."/>
            <person name="Sims D."/>
            <person name="Brettin T."/>
            <person name="Detter J.C."/>
            <person name="Han C."/>
            <person name="Kuske C.R."/>
            <person name="Schmutz J."/>
            <person name="Larimer F."/>
            <person name="Land M."/>
            <person name="Hauser L."/>
            <person name="Kyrpides N."/>
            <person name="Lykidis A."/>
            <person name="Zhao J.-S."/>
            <person name="Richardson P."/>
        </authorList>
    </citation>
    <scope>NUCLEOTIDE SEQUENCE [LARGE SCALE GENOMIC DNA]</scope>
    <source>
        <strain>ATCC 51908 / MS32</strain>
    </source>
</reference>
<gene>
    <name evidence="1" type="primary">recF</name>
    <name type="ordered locus">Swoo_0003</name>
</gene>
<comment type="function">
    <text evidence="1">The RecF protein is involved in DNA metabolism; it is required for DNA replication and normal SOS inducibility. RecF binds preferentially to single-stranded, linear DNA. It also seems to bind ATP.</text>
</comment>
<comment type="subcellular location">
    <subcellularLocation>
        <location evidence="1">Cytoplasm</location>
    </subcellularLocation>
</comment>
<comment type="similarity">
    <text evidence="1">Belongs to the RecF family.</text>
</comment>
<organism>
    <name type="scientific">Shewanella woodyi (strain ATCC 51908 / MS32)</name>
    <dbReference type="NCBI Taxonomy" id="392500"/>
    <lineage>
        <taxon>Bacteria</taxon>
        <taxon>Pseudomonadati</taxon>
        <taxon>Pseudomonadota</taxon>
        <taxon>Gammaproteobacteria</taxon>
        <taxon>Alteromonadales</taxon>
        <taxon>Shewanellaceae</taxon>
        <taxon>Shewanella</taxon>
    </lineage>
</organism>
<proteinExistence type="inferred from homology"/>
<evidence type="ECO:0000255" key="1">
    <source>
        <dbReference type="HAMAP-Rule" id="MF_00365"/>
    </source>
</evidence>